<evidence type="ECO:0000250" key="1">
    <source>
        <dbReference type="UniProtKB" id="Q13886"/>
    </source>
</evidence>
<evidence type="ECO:0000255" key="2">
    <source>
        <dbReference type="PROSITE-ProRule" id="PRU00042"/>
    </source>
</evidence>
<evidence type="ECO:0000256" key="3">
    <source>
        <dbReference type="SAM" id="MobiDB-lite"/>
    </source>
</evidence>
<evidence type="ECO:0000305" key="4"/>
<feature type="chain" id="PRO_0000047157" description="Krueppel-like factor 9">
    <location>
        <begin position="1"/>
        <end position="244"/>
    </location>
</feature>
<feature type="zinc finger region" description="C2H2-type 1" evidence="2">
    <location>
        <begin position="143"/>
        <end position="167"/>
    </location>
</feature>
<feature type="zinc finger region" description="C2H2-type 2" evidence="2">
    <location>
        <begin position="173"/>
        <end position="197"/>
    </location>
</feature>
<feature type="zinc finger region" description="C2H2-type 3" evidence="2">
    <location>
        <begin position="203"/>
        <end position="225"/>
    </location>
</feature>
<feature type="region of interest" description="Disordered" evidence="3">
    <location>
        <begin position="24"/>
        <end position="51"/>
    </location>
</feature>
<feature type="region of interest" description="Disordered" evidence="3">
    <location>
        <begin position="79"/>
        <end position="143"/>
    </location>
</feature>
<feature type="compositionally biased region" description="Basic and acidic residues" evidence="3">
    <location>
        <begin position="32"/>
        <end position="51"/>
    </location>
</feature>
<feature type="compositionally biased region" description="Basic residues" evidence="3">
    <location>
        <begin position="134"/>
        <end position="143"/>
    </location>
</feature>
<feature type="modified residue" description="Phosphoserine" evidence="1">
    <location>
        <position position="122"/>
    </location>
</feature>
<sequence>MSAAAYMDFVAAQCLVSISNRAAVPEHGGAPDAERLRLPEREVTKEHGDPGDTWKDYCTLVTIAKSLLDLNKYRPIQTPSVCSDSLESPDEDIGSDSDVTTESGSSPSHSPEERQDSGSAPSPLSLLHSGVASKGKHASEKRHKCPYSGCGKVYGKSSHLKAHYRVHTGERPFPCTWPDCLKKFSRSDELTRHYRTHTGEKQFRCPLCEKRFMRSDHLTKHARRHTDFHPSMIKRSKKALASPL</sequence>
<organism>
    <name type="scientific">Rattus norvegicus</name>
    <name type="common">Rat</name>
    <dbReference type="NCBI Taxonomy" id="10116"/>
    <lineage>
        <taxon>Eukaryota</taxon>
        <taxon>Metazoa</taxon>
        <taxon>Chordata</taxon>
        <taxon>Craniata</taxon>
        <taxon>Vertebrata</taxon>
        <taxon>Euteleostomi</taxon>
        <taxon>Mammalia</taxon>
        <taxon>Eutheria</taxon>
        <taxon>Euarchontoglires</taxon>
        <taxon>Glires</taxon>
        <taxon>Rodentia</taxon>
        <taxon>Myomorpha</taxon>
        <taxon>Muroidea</taxon>
        <taxon>Muridae</taxon>
        <taxon>Murinae</taxon>
        <taxon>Rattus</taxon>
    </lineage>
</organism>
<comment type="function">
    <text evidence="1">Transcription factor that binds to GC box promoter elements. Selectively activates mRNA synthesis from genes containing tandem repeats of GC boxes but represses genes with a single GC box. Acts as an epidermal circadian transcription factor regulating keratinocyte proliferation.</text>
</comment>
<comment type="subunit">
    <text evidence="1">Interacts with ZZEF1.</text>
</comment>
<comment type="subcellular location">
    <subcellularLocation>
        <location evidence="1">Nucleus</location>
    </subcellularLocation>
</comment>
<comment type="similarity">
    <text evidence="4">Belongs to the Sp1 C2H2-type zinc-finger protein family.</text>
</comment>
<protein>
    <recommendedName>
        <fullName>Krueppel-like factor 9</fullName>
    </recommendedName>
    <alternativeName>
        <fullName>Basic transcription element-binding protein 1</fullName>
        <shortName>BTE-binding protein 1</shortName>
    </alternativeName>
    <alternativeName>
        <fullName>GC-box-binding protein 1</fullName>
    </alternativeName>
    <alternativeName>
        <fullName>Transcription factor BTEB1</fullName>
    </alternativeName>
</protein>
<reference key="1">
    <citation type="journal article" date="1992" name="EMBO J.">
        <title>Two regulatory proteins that bind to the basic transcription element (BTE), a GC box sequence in the promoter region of the rat P-4501A1 gene.</title>
        <authorList>
            <person name="Imataka H."/>
            <person name="Sogawa K."/>
            <person name="Yasumoto K."/>
            <person name="Kikuchi Y."/>
            <person name="Sasano K."/>
            <person name="Kobayashi A."/>
            <person name="Hayami M."/>
            <person name="Fujii-Kuriyama Y."/>
        </authorList>
    </citation>
    <scope>NUCLEOTIDE SEQUENCE [MRNA]</scope>
    <source>
        <tissue>Liver</tissue>
    </source>
</reference>
<dbReference type="EMBL" id="D12769">
    <property type="protein sequence ID" value="BAA02236.1"/>
    <property type="molecule type" value="mRNA"/>
</dbReference>
<dbReference type="PIR" id="JS0748">
    <property type="entry name" value="JS0748"/>
</dbReference>
<dbReference type="PIR" id="S25288">
    <property type="entry name" value="S25288"/>
</dbReference>
<dbReference type="RefSeq" id="NP_476559.1">
    <property type="nucleotide sequence ID" value="NM_057211.1"/>
</dbReference>
<dbReference type="SMR" id="Q01713"/>
<dbReference type="FunCoup" id="Q01713">
    <property type="interactions" value="20"/>
</dbReference>
<dbReference type="STRING" id="10116.ENSRNOP00000019367"/>
<dbReference type="iPTMnet" id="Q01713"/>
<dbReference type="PhosphoSitePlus" id="Q01713"/>
<dbReference type="PaxDb" id="10116-ENSRNOP00000019367"/>
<dbReference type="GeneID" id="117560"/>
<dbReference type="KEGG" id="rno:117560"/>
<dbReference type="UCSC" id="RGD:70934">
    <property type="organism name" value="rat"/>
</dbReference>
<dbReference type="AGR" id="RGD:70934"/>
<dbReference type="CTD" id="687"/>
<dbReference type="RGD" id="70934">
    <property type="gene designation" value="Klf9"/>
</dbReference>
<dbReference type="eggNOG" id="KOG1721">
    <property type="taxonomic scope" value="Eukaryota"/>
</dbReference>
<dbReference type="InParanoid" id="Q01713"/>
<dbReference type="PhylomeDB" id="Q01713"/>
<dbReference type="PRO" id="PR:Q01713"/>
<dbReference type="Proteomes" id="UP000002494">
    <property type="component" value="Unplaced"/>
</dbReference>
<dbReference type="GO" id="GO:0005634">
    <property type="term" value="C:nucleus"/>
    <property type="evidence" value="ECO:0000250"/>
    <property type="project" value="UniProtKB"/>
</dbReference>
<dbReference type="GO" id="GO:0001228">
    <property type="term" value="F:DNA-binding transcription activator activity, RNA polymerase II-specific"/>
    <property type="evidence" value="ECO:0000266"/>
    <property type="project" value="RGD"/>
</dbReference>
<dbReference type="GO" id="GO:0003700">
    <property type="term" value="F:DNA-binding transcription factor activity"/>
    <property type="evidence" value="ECO:0000266"/>
    <property type="project" value="RGD"/>
</dbReference>
<dbReference type="GO" id="GO:0000981">
    <property type="term" value="F:DNA-binding transcription factor activity, RNA polymerase II-specific"/>
    <property type="evidence" value="ECO:0000318"/>
    <property type="project" value="GO_Central"/>
</dbReference>
<dbReference type="GO" id="GO:0000978">
    <property type="term" value="F:RNA polymerase II cis-regulatory region sequence-specific DNA binding"/>
    <property type="evidence" value="ECO:0000318"/>
    <property type="project" value="GO_Central"/>
</dbReference>
<dbReference type="GO" id="GO:0000977">
    <property type="term" value="F:RNA polymerase II transcription regulatory region sequence-specific DNA binding"/>
    <property type="evidence" value="ECO:0000266"/>
    <property type="project" value="RGD"/>
</dbReference>
<dbReference type="GO" id="GO:0008270">
    <property type="term" value="F:zinc ion binding"/>
    <property type="evidence" value="ECO:0007669"/>
    <property type="project" value="UniProtKB-KW"/>
</dbReference>
<dbReference type="GO" id="GO:0071387">
    <property type="term" value="P:cellular response to cortisol stimulus"/>
    <property type="evidence" value="ECO:0000250"/>
    <property type="project" value="UniProtKB"/>
</dbReference>
<dbReference type="GO" id="GO:1990859">
    <property type="term" value="P:cellular response to endothelin"/>
    <property type="evidence" value="ECO:0000270"/>
    <property type="project" value="RGD"/>
</dbReference>
<dbReference type="GO" id="GO:0007623">
    <property type="term" value="P:circadian rhythm"/>
    <property type="evidence" value="ECO:0000266"/>
    <property type="project" value="RGD"/>
</dbReference>
<dbReference type="GO" id="GO:0007566">
    <property type="term" value="P:embryo implantation"/>
    <property type="evidence" value="ECO:0000266"/>
    <property type="project" value="RGD"/>
</dbReference>
<dbReference type="GO" id="GO:0010839">
    <property type="term" value="P:negative regulation of keratinocyte proliferation"/>
    <property type="evidence" value="ECO:0000250"/>
    <property type="project" value="UniProtKB"/>
</dbReference>
<dbReference type="GO" id="GO:0045944">
    <property type="term" value="P:positive regulation of transcription by RNA polymerase II"/>
    <property type="evidence" value="ECO:0000266"/>
    <property type="project" value="RGD"/>
</dbReference>
<dbReference type="GO" id="GO:0050847">
    <property type="term" value="P:progesterone receptor signaling pathway"/>
    <property type="evidence" value="ECO:0000266"/>
    <property type="project" value="RGD"/>
</dbReference>
<dbReference type="GO" id="GO:0006355">
    <property type="term" value="P:regulation of DNA-templated transcription"/>
    <property type="evidence" value="ECO:0000266"/>
    <property type="project" value="RGD"/>
</dbReference>
<dbReference type="GO" id="GO:0006357">
    <property type="term" value="P:regulation of transcription by RNA polymerase II"/>
    <property type="evidence" value="ECO:0000318"/>
    <property type="project" value="GO_Central"/>
</dbReference>
<dbReference type="CDD" id="cd21578">
    <property type="entry name" value="KLF9_N"/>
    <property type="match status" value="1"/>
</dbReference>
<dbReference type="FunFam" id="3.30.160.60:FF:000018">
    <property type="entry name" value="Krueppel-like factor 15"/>
    <property type="match status" value="1"/>
</dbReference>
<dbReference type="FunFam" id="3.30.160.60:FF:000232">
    <property type="entry name" value="Krueppel-like factor 9"/>
    <property type="match status" value="1"/>
</dbReference>
<dbReference type="FunFam" id="3.30.160.60:FF:000521">
    <property type="entry name" value="Krueppel-like factor 9"/>
    <property type="match status" value="1"/>
</dbReference>
<dbReference type="Gene3D" id="3.30.160.60">
    <property type="entry name" value="Classic Zinc Finger"/>
    <property type="match status" value="3"/>
</dbReference>
<dbReference type="InterPro" id="IPR036236">
    <property type="entry name" value="Znf_C2H2_sf"/>
</dbReference>
<dbReference type="InterPro" id="IPR013087">
    <property type="entry name" value="Znf_C2H2_type"/>
</dbReference>
<dbReference type="PANTHER" id="PTHR23235:SF132">
    <property type="entry name" value="KRUEPPEL-LIKE FACTOR 9"/>
    <property type="match status" value="1"/>
</dbReference>
<dbReference type="PANTHER" id="PTHR23235">
    <property type="entry name" value="KRUEPPEL-LIKE TRANSCRIPTION FACTOR"/>
    <property type="match status" value="1"/>
</dbReference>
<dbReference type="Pfam" id="PF00096">
    <property type="entry name" value="zf-C2H2"/>
    <property type="match status" value="3"/>
</dbReference>
<dbReference type="SMART" id="SM00355">
    <property type="entry name" value="ZnF_C2H2"/>
    <property type="match status" value="3"/>
</dbReference>
<dbReference type="SUPFAM" id="SSF57667">
    <property type="entry name" value="beta-beta-alpha zinc fingers"/>
    <property type="match status" value="2"/>
</dbReference>
<dbReference type="PROSITE" id="PS00028">
    <property type="entry name" value="ZINC_FINGER_C2H2_1"/>
    <property type="match status" value="3"/>
</dbReference>
<dbReference type="PROSITE" id="PS50157">
    <property type="entry name" value="ZINC_FINGER_C2H2_2"/>
    <property type="match status" value="3"/>
</dbReference>
<proteinExistence type="evidence at transcript level"/>
<accession>Q01713</accession>
<gene>
    <name type="primary">Klf9</name>
    <name type="synonym">Bteb</name>
    <name type="synonym">Bteb1</name>
</gene>
<keyword id="KW-0090">Biological rhythms</keyword>
<keyword id="KW-0238">DNA-binding</keyword>
<keyword id="KW-0479">Metal-binding</keyword>
<keyword id="KW-0539">Nucleus</keyword>
<keyword id="KW-0597">Phosphoprotein</keyword>
<keyword id="KW-1185">Reference proteome</keyword>
<keyword id="KW-0677">Repeat</keyword>
<keyword id="KW-0804">Transcription</keyword>
<keyword id="KW-0805">Transcription regulation</keyword>
<keyword id="KW-0862">Zinc</keyword>
<keyword id="KW-0863">Zinc-finger</keyword>
<name>KLF9_RAT</name>